<organism>
    <name type="scientific">Pan paniscus</name>
    <name type="common">Pygmy chimpanzee</name>
    <name type="synonym">Bonobo</name>
    <dbReference type="NCBI Taxonomy" id="9597"/>
    <lineage>
        <taxon>Eukaryota</taxon>
        <taxon>Metazoa</taxon>
        <taxon>Chordata</taxon>
        <taxon>Craniata</taxon>
        <taxon>Vertebrata</taxon>
        <taxon>Euteleostomi</taxon>
        <taxon>Mammalia</taxon>
        <taxon>Eutheria</taxon>
        <taxon>Euarchontoglires</taxon>
        <taxon>Primates</taxon>
        <taxon>Haplorrhini</taxon>
        <taxon>Catarrhini</taxon>
        <taxon>Hominidae</taxon>
        <taxon>Pan</taxon>
    </lineage>
</organism>
<feature type="initiator methionine" description="Removed" evidence="2">
    <location>
        <position position="1"/>
    </location>
</feature>
<feature type="chain" id="PRO_0000285511" description="Protein HTATIP2">
    <location>
        <begin position="2"/>
        <end position="242"/>
    </location>
</feature>
<feature type="region of interest" description="Required for interaction with elongation factor EEF1A1" evidence="1">
    <location>
        <begin position="2"/>
        <end position="25"/>
    </location>
</feature>
<feature type="active site" description="Proton acceptor" evidence="2">
    <location>
        <position position="143"/>
    </location>
</feature>
<feature type="active site" evidence="2">
    <location>
        <position position="147"/>
    </location>
</feature>
<feature type="binding site" evidence="2">
    <location>
        <position position="27"/>
    </location>
    <ligand>
        <name>NADPH</name>
        <dbReference type="ChEBI" id="CHEBI:57783"/>
    </ligand>
</feature>
<feature type="binding site" evidence="2">
    <location>
        <position position="28"/>
    </location>
    <ligand>
        <name>NADPH</name>
        <dbReference type="ChEBI" id="CHEBI:57783"/>
    </ligand>
</feature>
<feature type="binding site" evidence="2">
    <location>
        <position position="29"/>
    </location>
    <ligand>
        <name>NADPH</name>
        <dbReference type="ChEBI" id="CHEBI:57783"/>
    </ligand>
</feature>
<feature type="binding site" evidence="2">
    <location>
        <position position="30"/>
    </location>
    <ligand>
        <name>NADPH</name>
        <dbReference type="ChEBI" id="CHEBI:57783"/>
    </ligand>
</feature>
<feature type="binding site" evidence="2">
    <location>
        <position position="52"/>
    </location>
    <ligand>
        <name>NADPH</name>
        <dbReference type="ChEBI" id="CHEBI:57783"/>
    </ligand>
</feature>
<feature type="binding site" evidence="2">
    <location>
        <position position="53"/>
    </location>
    <ligand>
        <name>NADPH</name>
        <dbReference type="ChEBI" id="CHEBI:57783"/>
    </ligand>
</feature>
<feature type="binding site" evidence="2">
    <location>
        <position position="92"/>
    </location>
    <ligand>
        <name>NADPH</name>
        <dbReference type="ChEBI" id="CHEBI:57783"/>
    </ligand>
</feature>
<feature type="binding site" evidence="2">
    <location>
        <position position="93"/>
    </location>
    <ligand>
        <name>NADPH</name>
        <dbReference type="ChEBI" id="CHEBI:57783"/>
    </ligand>
</feature>
<feature type="binding site" evidence="2">
    <location>
        <position position="143"/>
    </location>
    <ligand>
        <name>NADPH</name>
        <dbReference type="ChEBI" id="CHEBI:57783"/>
    </ligand>
</feature>
<feature type="binding site" evidence="2">
    <location>
        <position position="147"/>
    </location>
    <ligand>
        <name>NADPH</name>
        <dbReference type="ChEBI" id="CHEBI:57783"/>
    </ligand>
</feature>
<feature type="binding site" evidence="2">
    <location>
        <position position="178"/>
    </location>
    <ligand>
        <name>NADPH</name>
        <dbReference type="ChEBI" id="CHEBI:57783"/>
    </ligand>
</feature>
<feature type="modified residue" description="N-acetylalanine" evidence="2">
    <location>
        <position position="2"/>
    </location>
</feature>
<feature type="disulfide bond" description="Interchain; during oxidative stress" evidence="2">
    <location>
        <position position="172"/>
    </location>
</feature>
<sequence length="242" mass="27019">MAETEALSKLREDFRMQNKSVFILGASGETGRVLLKEILEQGLFSKVTLIGRRKLTFDEEAYKNVNQEVVDFEKLDDYASAFQGHDVGFCCLGTTRGKAGAEGFARVDRDYVLKSAELAKAGGCKHFNLLSSKGADKSSNFLYLQVKGEVEAKVEELKFDRYSVFRPGVXLCDRQESRPGEWLVRKFFGSLPDSWASGHSVPVVTVVRAMLNNVVRPRDKQMELLENKAIHDLGKAHGSLKP</sequence>
<accession>A1YFX9</accession>
<protein>
    <recommendedName>
        <fullName evidence="3">Protein HTATIP2</fullName>
    </recommendedName>
</protein>
<keyword id="KW-0007">Acetylation</keyword>
<keyword id="KW-0963">Cytoplasm</keyword>
<keyword id="KW-1015">Disulfide bond</keyword>
<keyword id="KW-0521">NADP</keyword>
<keyword id="KW-1185">Reference proteome</keyword>
<keyword id="KW-0810">Translation regulation</keyword>
<keyword id="KW-0043">Tumor suppressor</keyword>
<name>HTAI2_PANPA</name>
<gene>
    <name type="primary">HTATIP2</name>
</gene>
<dbReference type="EMBL" id="DQ977174">
    <property type="protein sequence ID" value="ABM54204.1"/>
    <property type="molecule type" value="Genomic_DNA"/>
</dbReference>
<dbReference type="STRING" id="9597.ENSPPAP00000018557"/>
<dbReference type="eggNOG" id="KOG4039">
    <property type="taxonomic scope" value="Eukaryota"/>
</dbReference>
<dbReference type="Proteomes" id="UP000240080">
    <property type="component" value="Unplaced"/>
</dbReference>
<dbReference type="GO" id="GO:0005737">
    <property type="term" value="C:cytoplasm"/>
    <property type="evidence" value="ECO:0007669"/>
    <property type="project" value="UniProtKB-SubCell"/>
</dbReference>
<dbReference type="GO" id="GO:0005635">
    <property type="term" value="C:nuclear envelope"/>
    <property type="evidence" value="ECO:0007669"/>
    <property type="project" value="UniProtKB-SubCell"/>
</dbReference>
<dbReference type="GO" id="GO:0051287">
    <property type="term" value="F:NAD binding"/>
    <property type="evidence" value="ECO:0007669"/>
    <property type="project" value="InterPro"/>
</dbReference>
<dbReference type="GO" id="GO:0016620">
    <property type="term" value="F:oxidoreductase activity, acting on the aldehyde or oxo group of donors, NAD or NADP as acceptor"/>
    <property type="evidence" value="ECO:0007669"/>
    <property type="project" value="InterPro"/>
</dbReference>
<dbReference type="GO" id="GO:1901607">
    <property type="term" value="P:alpha-amino acid biosynthetic process"/>
    <property type="evidence" value="ECO:0007669"/>
    <property type="project" value="UniProtKB-ARBA"/>
</dbReference>
<dbReference type="GO" id="GO:0001525">
    <property type="term" value="P:angiogenesis"/>
    <property type="evidence" value="ECO:0007669"/>
    <property type="project" value="UniProtKB-KW"/>
</dbReference>
<dbReference type="GO" id="GO:0006915">
    <property type="term" value="P:apoptotic process"/>
    <property type="evidence" value="ECO:0007669"/>
    <property type="project" value="UniProtKB-KW"/>
</dbReference>
<dbReference type="GO" id="GO:0030154">
    <property type="term" value="P:cell differentiation"/>
    <property type="evidence" value="ECO:0007669"/>
    <property type="project" value="UniProtKB-KW"/>
</dbReference>
<dbReference type="GO" id="GO:0051170">
    <property type="term" value="P:import into nucleus"/>
    <property type="evidence" value="ECO:0007669"/>
    <property type="project" value="TreeGrafter"/>
</dbReference>
<dbReference type="CDD" id="cd05250">
    <property type="entry name" value="CC3_like_SDR_a"/>
    <property type="match status" value="1"/>
</dbReference>
<dbReference type="FunFam" id="3.40.50.720:FF:000271">
    <property type="entry name" value="oxidoreductase HTATIP2 isoform X1"/>
    <property type="match status" value="1"/>
</dbReference>
<dbReference type="Gene3D" id="3.40.50.720">
    <property type="entry name" value="NAD(P)-binding Rossmann-like Domain"/>
    <property type="match status" value="1"/>
</dbReference>
<dbReference type="InterPro" id="IPR016040">
    <property type="entry name" value="NAD(P)-bd_dom"/>
</dbReference>
<dbReference type="InterPro" id="IPR036291">
    <property type="entry name" value="NAD(P)-bd_dom_sf"/>
</dbReference>
<dbReference type="InterPro" id="IPR000534">
    <property type="entry name" value="Semialdehyde_DH_NAD-bd"/>
</dbReference>
<dbReference type="PANTHER" id="PTHR14097">
    <property type="entry name" value="OXIDOREDUCTASE HTATIP2"/>
    <property type="match status" value="1"/>
</dbReference>
<dbReference type="PANTHER" id="PTHR14097:SF7">
    <property type="entry name" value="OXIDOREDUCTASE HTATIP2"/>
    <property type="match status" value="1"/>
</dbReference>
<dbReference type="Pfam" id="PF13460">
    <property type="entry name" value="NAD_binding_10"/>
    <property type="match status" value="1"/>
</dbReference>
<dbReference type="SMART" id="SM00859">
    <property type="entry name" value="Semialdhyde_dh"/>
    <property type="match status" value="1"/>
</dbReference>
<dbReference type="SUPFAM" id="SSF51735">
    <property type="entry name" value="NAD(P)-binding Rossmann-fold domains"/>
    <property type="match status" value="1"/>
</dbReference>
<proteinExistence type="inferred from homology"/>
<comment type="function">
    <text evidence="1 2">Represses translation by preventing reactivation of elongation factor eEF1A (By similarity). May also inhibit nuclear import by competing with nuclear import substrates for binding to a subset of nuclear transport receptors. Has additionally been proposed to act as a redox sensor involved in cellular oxidative stress surveillance (By similarity).</text>
</comment>
<comment type="subunit">
    <text evidence="1 2">Monomer. Forms homodimers during oxidative stress (By similarity). Interacts (via N-terminus) with elongation factor EEF1A1 (via middle-region); the interaction is direct and competes with EEF1A1 binding to guanyl-nucleotide exchange factor EEF1B2, thereby inhibiting GDP for GTP exchange and reactivation of EEF1A1 (By similarity). Interacts with nuclear transport receptors XPO4, IPO5/RANBP5, IPO7, IPO9 and KPNB1 as well as GCN1L1/GCN1 and LRPPRC probably through their HEAT repeats. Binds NCOA5/CIA (By similarity).</text>
</comment>
<comment type="subcellular location">
    <subcellularLocation>
        <location evidence="2">Cytoplasm</location>
    </subcellularLocation>
</comment>
<reference key="1">
    <citation type="submission" date="2006-08" db="EMBL/GenBank/DDBJ databases">
        <title>Positive selection in transcription factor genes on the human lineage.</title>
        <authorList>
            <person name="Nickel G.C."/>
            <person name="Tefft D.L."/>
            <person name="Trevarthen K."/>
            <person name="Funt J."/>
            <person name="Adams M.D."/>
        </authorList>
    </citation>
    <scope>NUCLEOTIDE SEQUENCE [GENOMIC DNA]</scope>
</reference>
<evidence type="ECO:0000250" key="1">
    <source>
        <dbReference type="UniProtKB" id="B0BNF8"/>
    </source>
</evidence>
<evidence type="ECO:0000250" key="2">
    <source>
        <dbReference type="UniProtKB" id="Q9BUP3"/>
    </source>
</evidence>
<evidence type="ECO:0000305" key="3"/>